<gene>
    <name evidence="1" type="primary">pheS</name>
    <name type="ordered locus">Glov_1873</name>
</gene>
<reference key="1">
    <citation type="submission" date="2008-05" db="EMBL/GenBank/DDBJ databases">
        <title>Complete sequence of chromosome of Geobacter lovleyi SZ.</title>
        <authorList>
            <consortium name="US DOE Joint Genome Institute"/>
            <person name="Lucas S."/>
            <person name="Copeland A."/>
            <person name="Lapidus A."/>
            <person name="Glavina del Rio T."/>
            <person name="Dalin E."/>
            <person name="Tice H."/>
            <person name="Bruce D."/>
            <person name="Goodwin L."/>
            <person name="Pitluck S."/>
            <person name="Chertkov O."/>
            <person name="Meincke L."/>
            <person name="Brettin T."/>
            <person name="Detter J.C."/>
            <person name="Han C."/>
            <person name="Tapia R."/>
            <person name="Kuske C.R."/>
            <person name="Schmutz J."/>
            <person name="Larimer F."/>
            <person name="Land M."/>
            <person name="Hauser L."/>
            <person name="Kyrpides N."/>
            <person name="Mikhailova N."/>
            <person name="Sung Y."/>
            <person name="Fletcher K.E."/>
            <person name="Ritalahti K.M."/>
            <person name="Loeffler F.E."/>
            <person name="Richardson P."/>
        </authorList>
    </citation>
    <scope>NUCLEOTIDE SEQUENCE [LARGE SCALE GENOMIC DNA]</scope>
    <source>
        <strain>ATCC BAA-1151 / DSM 17278 / SZ</strain>
    </source>
</reference>
<sequence>MREQLEQMRQQALSAIAAATTEEMLNEVRVRYLGRKGELTGLMKGLGSLPADERPKVGQLVNTVKDEVEALIEQTMNRAREEATAKRLATERIDISLPGRGRRQGSKHPVTLVIEEVSEIFAGLGFSVAEGPEIEHDWYNFEALNFPPEHPARDMQDTFFVENELLLRTHTSPVQIRTMLKQKPPVRIIAPGTVYRCDSDATHSPMFHQIEGLMVDSQVSFADLKGILTTFTNQLFGQKTGVRLRPSFFPFTEPSAEVDIACVICGGSGCRVCKQTGWLEILGAGMVDPEVFRHVGYDPETISGFAFGMGIERIAMLKYGISDMRLLFENDVRFLKQF</sequence>
<proteinExistence type="inferred from homology"/>
<comment type="catalytic activity">
    <reaction evidence="1">
        <text>tRNA(Phe) + L-phenylalanine + ATP = L-phenylalanyl-tRNA(Phe) + AMP + diphosphate + H(+)</text>
        <dbReference type="Rhea" id="RHEA:19413"/>
        <dbReference type="Rhea" id="RHEA-COMP:9668"/>
        <dbReference type="Rhea" id="RHEA-COMP:9699"/>
        <dbReference type="ChEBI" id="CHEBI:15378"/>
        <dbReference type="ChEBI" id="CHEBI:30616"/>
        <dbReference type="ChEBI" id="CHEBI:33019"/>
        <dbReference type="ChEBI" id="CHEBI:58095"/>
        <dbReference type="ChEBI" id="CHEBI:78442"/>
        <dbReference type="ChEBI" id="CHEBI:78531"/>
        <dbReference type="ChEBI" id="CHEBI:456215"/>
        <dbReference type="EC" id="6.1.1.20"/>
    </reaction>
</comment>
<comment type="cofactor">
    <cofactor evidence="1">
        <name>Mg(2+)</name>
        <dbReference type="ChEBI" id="CHEBI:18420"/>
    </cofactor>
    <text evidence="1">Binds 2 magnesium ions per tetramer.</text>
</comment>
<comment type="subunit">
    <text evidence="1">Tetramer of two alpha and two beta subunits.</text>
</comment>
<comment type="subcellular location">
    <subcellularLocation>
        <location evidence="1">Cytoplasm</location>
    </subcellularLocation>
</comment>
<comment type="similarity">
    <text evidence="1">Belongs to the class-II aminoacyl-tRNA synthetase family. Phe-tRNA synthetase alpha subunit type 1 subfamily.</text>
</comment>
<name>SYFA_TRIL1</name>
<protein>
    <recommendedName>
        <fullName evidence="1">Phenylalanine--tRNA ligase alpha subunit</fullName>
        <ecNumber evidence="1">6.1.1.20</ecNumber>
    </recommendedName>
    <alternativeName>
        <fullName evidence="1">Phenylalanyl-tRNA synthetase alpha subunit</fullName>
        <shortName evidence="1">PheRS</shortName>
    </alternativeName>
</protein>
<keyword id="KW-0030">Aminoacyl-tRNA synthetase</keyword>
<keyword id="KW-0067">ATP-binding</keyword>
<keyword id="KW-0963">Cytoplasm</keyword>
<keyword id="KW-0436">Ligase</keyword>
<keyword id="KW-0460">Magnesium</keyword>
<keyword id="KW-0479">Metal-binding</keyword>
<keyword id="KW-0547">Nucleotide-binding</keyword>
<keyword id="KW-0648">Protein biosynthesis</keyword>
<keyword id="KW-1185">Reference proteome</keyword>
<dbReference type="EC" id="6.1.1.20" evidence="1"/>
<dbReference type="EMBL" id="CP001089">
    <property type="protein sequence ID" value="ACD95589.1"/>
    <property type="molecule type" value="Genomic_DNA"/>
</dbReference>
<dbReference type="RefSeq" id="WP_012469928.1">
    <property type="nucleotide sequence ID" value="NC_010814.1"/>
</dbReference>
<dbReference type="SMR" id="B3E1T9"/>
<dbReference type="STRING" id="398767.Glov_1873"/>
<dbReference type="KEGG" id="glo:Glov_1873"/>
<dbReference type="eggNOG" id="COG0016">
    <property type="taxonomic scope" value="Bacteria"/>
</dbReference>
<dbReference type="HOGENOM" id="CLU_025086_0_1_7"/>
<dbReference type="OrthoDB" id="9800719at2"/>
<dbReference type="Proteomes" id="UP000002420">
    <property type="component" value="Chromosome"/>
</dbReference>
<dbReference type="GO" id="GO:0005737">
    <property type="term" value="C:cytoplasm"/>
    <property type="evidence" value="ECO:0007669"/>
    <property type="project" value="UniProtKB-SubCell"/>
</dbReference>
<dbReference type="GO" id="GO:0005524">
    <property type="term" value="F:ATP binding"/>
    <property type="evidence" value="ECO:0007669"/>
    <property type="project" value="UniProtKB-UniRule"/>
</dbReference>
<dbReference type="GO" id="GO:0000287">
    <property type="term" value="F:magnesium ion binding"/>
    <property type="evidence" value="ECO:0007669"/>
    <property type="project" value="UniProtKB-UniRule"/>
</dbReference>
<dbReference type="GO" id="GO:0004826">
    <property type="term" value="F:phenylalanine-tRNA ligase activity"/>
    <property type="evidence" value="ECO:0007669"/>
    <property type="project" value="UniProtKB-UniRule"/>
</dbReference>
<dbReference type="GO" id="GO:0000049">
    <property type="term" value="F:tRNA binding"/>
    <property type="evidence" value="ECO:0007669"/>
    <property type="project" value="InterPro"/>
</dbReference>
<dbReference type="GO" id="GO:0006432">
    <property type="term" value="P:phenylalanyl-tRNA aminoacylation"/>
    <property type="evidence" value="ECO:0007669"/>
    <property type="project" value="UniProtKB-UniRule"/>
</dbReference>
<dbReference type="CDD" id="cd00496">
    <property type="entry name" value="PheRS_alpha_core"/>
    <property type="match status" value="1"/>
</dbReference>
<dbReference type="FunFam" id="3.30.930.10:FF:000003">
    <property type="entry name" value="Phenylalanine--tRNA ligase alpha subunit"/>
    <property type="match status" value="1"/>
</dbReference>
<dbReference type="Gene3D" id="3.30.930.10">
    <property type="entry name" value="Bira Bifunctional Protein, Domain 2"/>
    <property type="match status" value="1"/>
</dbReference>
<dbReference type="HAMAP" id="MF_00281">
    <property type="entry name" value="Phe_tRNA_synth_alpha1"/>
    <property type="match status" value="1"/>
</dbReference>
<dbReference type="InterPro" id="IPR006195">
    <property type="entry name" value="aa-tRNA-synth_II"/>
</dbReference>
<dbReference type="InterPro" id="IPR045864">
    <property type="entry name" value="aa-tRNA-synth_II/BPL/LPL"/>
</dbReference>
<dbReference type="InterPro" id="IPR004529">
    <property type="entry name" value="Phe-tRNA-synth_IIc_asu"/>
</dbReference>
<dbReference type="InterPro" id="IPR004188">
    <property type="entry name" value="Phe-tRNA_ligase_II_N"/>
</dbReference>
<dbReference type="InterPro" id="IPR022911">
    <property type="entry name" value="Phe_tRNA_ligase_alpha1_bac"/>
</dbReference>
<dbReference type="InterPro" id="IPR002319">
    <property type="entry name" value="Phenylalanyl-tRNA_Synthase"/>
</dbReference>
<dbReference type="InterPro" id="IPR010978">
    <property type="entry name" value="tRNA-bd_arm"/>
</dbReference>
<dbReference type="NCBIfam" id="TIGR00468">
    <property type="entry name" value="pheS"/>
    <property type="match status" value="1"/>
</dbReference>
<dbReference type="PANTHER" id="PTHR11538:SF41">
    <property type="entry name" value="PHENYLALANINE--TRNA LIGASE, MITOCHONDRIAL"/>
    <property type="match status" value="1"/>
</dbReference>
<dbReference type="PANTHER" id="PTHR11538">
    <property type="entry name" value="PHENYLALANYL-TRNA SYNTHETASE"/>
    <property type="match status" value="1"/>
</dbReference>
<dbReference type="Pfam" id="PF02912">
    <property type="entry name" value="Phe_tRNA-synt_N"/>
    <property type="match status" value="1"/>
</dbReference>
<dbReference type="Pfam" id="PF01409">
    <property type="entry name" value="tRNA-synt_2d"/>
    <property type="match status" value="1"/>
</dbReference>
<dbReference type="SUPFAM" id="SSF55681">
    <property type="entry name" value="Class II aaRS and biotin synthetases"/>
    <property type="match status" value="1"/>
</dbReference>
<dbReference type="SUPFAM" id="SSF46589">
    <property type="entry name" value="tRNA-binding arm"/>
    <property type="match status" value="1"/>
</dbReference>
<dbReference type="PROSITE" id="PS50862">
    <property type="entry name" value="AA_TRNA_LIGASE_II"/>
    <property type="match status" value="1"/>
</dbReference>
<evidence type="ECO:0000255" key="1">
    <source>
        <dbReference type="HAMAP-Rule" id="MF_00281"/>
    </source>
</evidence>
<accession>B3E1T9</accession>
<organism>
    <name type="scientific">Trichlorobacter lovleyi (strain ATCC BAA-1151 / DSM 17278 / SZ)</name>
    <name type="common">Geobacter lovleyi</name>
    <dbReference type="NCBI Taxonomy" id="398767"/>
    <lineage>
        <taxon>Bacteria</taxon>
        <taxon>Pseudomonadati</taxon>
        <taxon>Thermodesulfobacteriota</taxon>
        <taxon>Desulfuromonadia</taxon>
        <taxon>Geobacterales</taxon>
        <taxon>Geobacteraceae</taxon>
        <taxon>Trichlorobacter</taxon>
    </lineage>
</organism>
<feature type="chain" id="PRO_1000114877" description="Phenylalanine--tRNA ligase alpha subunit">
    <location>
        <begin position="1"/>
        <end position="338"/>
    </location>
</feature>
<feature type="binding site" evidence="1">
    <location>
        <position position="253"/>
    </location>
    <ligand>
        <name>Mg(2+)</name>
        <dbReference type="ChEBI" id="CHEBI:18420"/>
        <note>shared with beta subunit</note>
    </ligand>
</feature>